<name>PUR4_XANCP</name>
<organism>
    <name type="scientific">Xanthomonas campestris pv. campestris (strain ATCC 33913 / DSM 3586 / NCPPB 528 / LMG 568 / P 25)</name>
    <dbReference type="NCBI Taxonomy" id="190485"/>
    <lineage>
        <taxon>Bacteria</taxon>
        <taxon>Pseudomonadati</taxon>
        <taxon>Pseudomonadota</taxon>
        <taxon>Gammaproteobacteria</taxon>
        <taxon>Lysobacterales</taxon>
        <taxon>Lysobacteraceae</taxon>
        <taxon>Xanthomonas</taxon>
    </lineage>
</organism>
<reference key="1">
    <citation type="journal article" date="2002" name="Nature">
        <title>Comparison of the genomes of two Xanthomonas pathogens with differing host specificities.</title>
        <authorList>
            <person name="da Silva A.C.R."/>
            <person name="Ferro J.A."/>
            <person name="Reinach F.C."/>
            <person name="Farah C.S."/>
            <person name="Furlan L.R."/>
            <person name="Quaggio R.B."/>
            <person name="Monteiro-Vitorello C.B."/>
            <person name="Van Sluys M.A."/>
            <person name="Almeida N.F. Jr."/>
            <person name="Alves L.M.C."/>
            <person name="do Amaral A.M."/>
            <person name="Bertolini M.C."/>
            <person name="Camargo L.E.A."/>
            <person name="Camarotte G."/>
            <person name="Cannavan F."/>
            <person name="Cardozo J."/>
            <person name="Chambergo F."/>
            <person name="Ciapina L.P."/>
            <person name="Cicarelli R.M.B."/>
            <person name="Coutinho L.L."/>
            <person name="Cursino-Santos J.R."/>
            <person name="El-Dorry H."/>
            <person name="Faria J.B."/>
            <person name="Ferreira A.J.S."/>
            <person name="Ferreira R.C.C."/>
            <person name="Ferro M.I.T."/>
            <person name="Formighieri E.F."/>
            <person name="Franco M.C."/>
            <person name="Greggio C.C."/>
            <person name="Gruber A."/>
            <person name="Katsuyama A.M."/>
            <person name="Kishi L.T."/>
            <person name="Leite R.P."/>
            <person name="Lemos E.G.M."/>
            <person name="Lemos M.V.F."/>
            <person name="Locali E.C."/>
            <person name="Machado M.A."/>
            <person name="Madeira A.M.B.N."/>
            <person name="Martinez-Rossi N.M."/>
            <person name="Martins E.C."/>
            <person name="Meidanis J."/>
            <person name="Menck C.F.M."/>
            <person name="Miyaki C.Y."/>
            <person name="Moon D.H."/>
            <person name="Moreira L.M."/>
            <person name="Novo M.T.M."/>
            <person name="Okura V.K."/>
            <person name="Oliveira M.C."/>
            <person name="Oliveira V.R."/>
            <person name="Pereira H.A."/>
            <person name="Rossi A."/>
            <person name="Sena J.A.D."/>
            <person name="Silva C."/>
            <person name="de Souza R.F."/>
            <person name="Spinola L.A.F."/>
            <person name="Takita M.A."/>
            <person name="Tamura R.E."/>
            <person name="Teixeira E.C."/>
            <person name="Tezza R.I.D."/>
            <person name="Trindade dos Santos M."/>
            <person name="Truffi D."/>
            <person name="Tsai S.M."/>
            <person name="White F.F."/>
            <person name="Setubal J.C."/>
            <person name="Kitajima J.P."/>
        </authorList>
    </citation>
    <scope>NUCLEOTIDE SEQUENCE [LARGE SCALE GENOMIC DNA]</scope>
    <source>
        <strain>ATCC 33913 / DSM 3586 / NCPPB 528 / LMG 568 / P 25</strain>
    </source>
</reference>
<sequence length="1348" mass="144279">MMVLEGASALSPFRRARLETRLQTLVPALRLTGAWHVYFIRADAGRTPDQATLQRILQAEPAPAPRDEAASSRYVVPRLGTLSPWSSKATELMRGAGQPIQRVERGTRIDLAGWPEGEADQAAVAKLLHDPMTQSLLGSAAAAEALFNVPDPGQLERIPLDALEQANGDLGLALAQDEIDYLRERFAALGRDPADVELMMFAQANSEHCRHKIFNASWTIDGKPQERSLFRMIKHTHQQTPQHTLSAYSDNAAVVEGVPAARFRPDPATGEYRSEAVVPSAFAIKVETHNHPTAIAPFPGAATGAGGEIRDEGATGRGGKPKAGLTGFSVSHLRIPTLPQPWEAPRALNPRMAPALDIMLDGPLGGAAFNNEFGRPNLLGYFRSFELAEGQGLTRAYDKPIMLAGGLGAIDRNQVEKLRLQPGDAVIVLGGPAMLIGLGGGAASSVAAGDSAEALDFASVQRENPEMERRCQEVIDHCVALGTDNPIRWFHDVGAGGLSNAIPELLHDSGVGGVIDLARVPSDDPSLSPLELWCNESQERYVLGVPQARLDEFAAICARERCPFAAVGVATAEERLVVGYGVFDAANRESGIGNRNSALPAAEAASAHSLFPTPDSPLPINLPMDVLFGKAPKMHRDAVHPAAPQWPVLQTGALDLQEAGLRVLAHPTVASKSFLVTIGDRSVGGLTAREQMIGPWQLPLADCAITLAGFETFDGEAMSIGERTPLALLNAAASARMAVGEAITNLCAAPVQTLDSIKLSANWMAAAGHAGEDALLYDAVRAVGMELCPALELSIPVGKDSLSMQAQWQVGNGESGIGNGETPAPSASAIPDSRLPIPGETLKSVSPVSLIISAFAPVSDVRTQLTPLLQREDESELWLIGLGGGKQRLGGSVLAQVYADDSALPAFGGETPDLDDPQRLRQFFELIRDAREGGLLLAYHDRSDGGAFAALCEMAFASRQGLDITLDAWGDDAFRSLFNEELGAVVQIANEDRAAFADLVERHALTECAQRIARPTGTPRVRVSGQGRVLAEWRWEALFDAWWSVTHAMQKLRDNPDSADEERAVARNFQAPGLRPKLVFDPSEDVAAPFVATGARPKVAILREQGVNGQIEMAYNFERAGFRAFDVHMSDLIEGRVDLAQFAGFAACGGFSYGDVLGAGRGWATSILERAALRDAFAAFFARSDTFALGVCNGCQMLSQLKDIIPGAEHWPRFLRNRSEQFEARTALLEVVESPSILLRGMAGSRIPVAVAHGEGRAEFDTAVDQAAARVALRFIDGDGAVASQYPLNPNGSPDGITGLTSTDGRATILMPHPERTPRSVNLSWHPAGWGEDSPWLRMFRNARVWCG</sequence>
<keyword id="KW-0067">ATP-binding</keyword>
<keyword id="KW-0963">Cytoplasm</keyword>
<keyword id="KW-0315">Glutamine amidotransferase</keyword>
<keyword id="KW-0436">Ligase</keyword>
<keyword id="KW-0460">Magnesium</keyword>
<keyword id="KW-0479">Metal-binding</keyword>
<keyword id="KW-0547">Nucleotide-binding</keyword>
<keyword id="KW-0658">Purine biosynthesis</keyword>
<keyword id="KW-1185">Reference proteome</keyword>
<accession>Q8PCQ7</accession>
<evidence type="ECO:0000255" key="1">
    <source>
        <dbReference type="HAMAP-Rule" id="MF_00419"/>
    </source>
</evidence>
<protein>
    <recommendedName>
        <fullName evidence="1">Phosphoribosylformylglycinamidine synthase</fullName>
        <shortName evidence="1">FGAM synthase</shortName>
        <shortName evidence="1">FGAMS</shortName>
        <ecNumber evidence="1">6.3.5.3</ecNumber>
    </recommendedName>
    <alternativeName>
        <fullName evidence="1">Formylglycinamide ribonucleotide amidotransferase</fullName>
        <shortName evidence="1">FGAR amidotransferase</shortName>
        <shortName evidence="1">FGAR-AT</shortName>
    </alternativeName>
</protein>
<dbReference type="EC" id="6.3.5.3" evidence="1"/>
<dbReference type="EMBL" id="AE008922">
    <property type="protein sequence ID" value="AAM39972.1"/>
    <property type="molecule type" value="Genomic_DNA"/>
</dbReference>
<dbReference type="RefSeq" id="NP_636048.1">
    <property type="nucleotide sequence ID" value="NC_003902.1"/>
</dbReference>
<dbReference type="RefSeq" id="WP_011035897.1">
    <property type="nucleotide sequence ID" value="NC_003902.1"/>
</dbReference>
<dbReference type="SMR" id="Q8PCQ7"/>
<dbReference type="STRING" id="190485.XCC0656"/>
<dbReference type="EnsemblBacteria" id="AAM39972">
    <property type="protein sequence ID" value="AAM39972"/>
    <property type="gene ID" value="XCC0656"/>
</dbReference>
<dbReference type="KEGG" id="xcc:XCC0656"/>
<dbReference type="PATRIC" id="fig|190485.4.peg.719"/>
<dbReference type="eggNOG" id="COG0046">
    <property type="taxonomic scope" value="Bacteria"/>
</dbReference>
<dbReference type="eggNOG" id="COG0047">
    <property type="taxonomic scope" value="Bacteria"/>
</dbReference>
<dbReference type="HOGENOM" id="CLU_001031_0_2_6"/>
<dbReference type="OrthoDB" id="9804441at2"/>
<dbReference type="UniPathway" id="UPA00074">
    <property type="reaction ID" value="UER00128"/>
</dbReference>
<dbReference type="Proteomes" id="UP000001010">
    <property type="component" value="Chromosome"/>
</dbReference>
<dbReference type="GO" id="GO:0005737">
    <property type="term" value="C:cytoplasm"/>
    <property type="evidence" value="ECO:0000318"/>
    <property type="project" value="GO_Central"/>
</dbReference>
<dbReference type="GO" id="GO:0005524">
    <property type="term" value="F:ATP binding"/>
    <property type="evidence" value="ECO:0007669"/>
    <property type="project" value="UniProtKB-UniRule"/>
</dbReference>
<dbReference type="GO" id="GO:0046872">
    <property type="term" value="F:metal ion binding"/>
    <property type="evidence" value="ECO:0007669"/>
    <property type="project" value="UniProtKB-KW"/>
</dbReference>
<dbReference type="GO" id="GO:0004642">
    <property type="term" value="F:phosphoribosylformylglycinamidine synthase activity"/>
    <property type="evidence" value="ECO:0000318"/>
    <property type="project" value="GO_Central"/>
</dbReference>
<dbReference type="GO" id="GO:0006189">
    <property type="term" value="P:'de novo' IMP biosynthetic process"/>
    <property type="evidence" value="ECO:0007669"/>
    <property type="project" value="UniProtKB-UniRule"/>
</dbReference>
<dbReference type="GO" id="GO:0006164">
    <property type="term" value="P:purine nucleotide biosynthetic process"/>
    <property type="evidence" value="ECO:0000318"/>
    <property type="project" value="GO_Central"/>
</dbReference>
<dbReference type="CDD" id="cd01740">
    <property type="entry name" value="GATase1_FGAR_AT"/>
    <property type="match status" value="1"/>
</dbReference>
<dbReference type="CDD" id="cd02203">
    <property type="entry name" value="PurL_repeat1"/>
    <property type="match status" value="1"/>
</dbReference>
<dbReference type="CDD" id="cd02204">
    <property type="entry name" value="PurL_repeat2"/>
    <property type="match status" value="1"/>
</dbReference>
<dbReference type="FunFam" id="3.30.1330.10:FF:000005">
    <property type="entry name" value="Phosphoribosylformylglycinamidine synthase"/>
    <property type="match status" value="1"/>
</dbReference>
<dbReference type="FunFam" id="3.40.50.880:FF:000008">
    <property type="entry name" value="Phosphoribosylformylglycinamidine synthase"/>
    <property type="match status" value="1"/>
</dbReference>
<dbReference type="FunFam" id="3.90.650.10:FF:000024">
    <property type="entry name" value="Phosphoribosylformylglycinamidine synthase"/>
    <property type="match status" value="1"/>
</dbReference>
<dbReference type="Gene3D" id="3.40.50.880">
    <property type="match status" value="1"/>
</dbReference>
<dbReference type="Gene3D" id="1.10.8.750">
    <property type="entry name" value="Phosphoribosylformylglycinamidine synthase, linker domain"/>
    <property type="match status" value="1"/>
</dbReference>
<dbReference type="Gene3D" id="3.90.650.10">
    <property type="entry name" value="PurM-like C-terminal domain"/>
    <property type="match status" value="2"/>
</dbReference>
<dbReference type="Gene3D" id="3.30.1330.10">
    <property type="entry name" value="PurM-like, N-terminal domain"/>
    <property type="match status" value="2"/>
</dbReference>
<dbReference type="HAMAP" id="MF_00419">
    <property type="entry name" value="PurL_1"/>
    <property type="match status" value="1"/>
</dbReference>
<dbReference type="InterPro" id="IPR029062">
    <property type="entry name" value="Class_I_gatase-like"/>
</dbReference>
<dbReference type="InterPro" id="IPR040707">
    <property type="entry name" value="FGAR-AT_N"/>
</dbReference>
<dbReference type="InterPro" id="IPR055181">
    <property type="entry name" value="FGAR-AT_PurM_N-like"/>
</dbReference>
<dbReference type="InterPro" id="IPR010073">
    <property type="entry name" value="PurL_large"/>
</dbReference>
<dbReference type="InterPro" id="IPR041609">
    <property type="entry name" value="PurL_linker"/>
</dbReference>
<dbReference type="InterPro" id="IPR010918">
    <property type="entry name" value="PurM-like_C_dom"/>
</dbReference>
<dbReference type="InterPro" id="IPR036676">
    <property type="entry name" value="PurM-like_C_sf"/>
</dbReference>
<dbReference type="InterPro" id="IPR036921">
    <property type="entry name" value="PurM-like_N_sf"/>
</dbReference>
<dbReference type="InterPro" id="IPR036604">
    <property type="entry name" value="PurS-like_sf"/>
</dbReference>
<dbReference type="NCBIfam" id="TIGR01735">
    <property type="entry name" value="FGAM_synt"/>
    <property type="match status" value="1"/>
</dbReference>
<dbReference type="NCBIfam" id="NF003672">
    <property type="entry name" value="PRK05297.1"/>
    <property type="match status" value="1"/>
</dbReference>
<dbReference type="PANTHER" id="PTHR10099">
    <property type="entry name" value="PHOSPHORIBOSYLFORMYLGLYCINAMIDINE SYNTHASE"/>
    <property type="match status" value="1"/>
</dbReference>
<dbReference type="PANTHER" id="PTHR10099:SF1">
    <property type="entry name" value="PHOSPHORIBOSYLFORMYLGLYCINAMIDINE SYNTHASE"/>
    <property type="match status" value="1"/>
</dbReference>
<dbReference type="Pfam" id="PF02769">
    <property type="entry name" value="AIRS_C"/>
    <property type="match status" value="2"/>
</dbReference>
<dbReference type="Pfam" id="PF18072">
    <property type="entry name" value="FGAR-AT_linker"/>
    <property type="match status" value="1"/>
</dbReference>
<dbReference type="Pfam" id="PF18076">
    <property type="entry name" value="FGAR-AT_N"/>
    <property type="match status" value="1"/>
</dbReference>
<dbReference type="Pfam" id="PF22689">
    <property type="entry name" value="FGAR-AT_PurM_N-like"/>
    <property type="match status" value="1"/>
</dbReference>
<dbReference type="Pfam" id="PF13507">
    <property type="entry name" value="GATase_5"/>
    <property type="match status" value="1"/>
</dbReference>
<dbReference type="SMART" id="SM01211">
    <property type="entry name" value="GATase_5"/>
    <property type="match status" value="1"/>
</dbReference>
<dbReference type="SUPFAM" id="SSF52317">
    <property type="entry name" value="Class I glutamine amidotransferase-like"/>
    <property type="match status" value="1"/>
</dbReference>
<dbReference type="SUPFAM" id="SSF109736">
    <property type="entry name" value="FGAM synthase PurL, linker domain"/>
    <property type="match status" value="1"/>
</dbReference>
<dbReference type="SUPFAM" id="SSF56042">
    <property type="entry name" value="PurM C-terminal domain-like"/>
    <property type="match status" value="2"/>
</dbReference>
<dbReference type="SUPFAM" id="SSF55326">
    <property type="entry name" value="PurM N-terminal domain-like"/>
    <property type="match status" value="2"/>
</dbReference>
<dbReference type="SUPFAM" id="SSF82697">
    <property type="entry name" value="PurS-like"/>
    <property type="match status" value="1"/>
</dbReference>
<dbReference type="PROSITE" id="PS51273">
    <property type="entry name" value="GATASE_TYPE_1"/>
    <property type="match status" value="1"/>
</dbReference>
<feature type="chain" id="PRO_0000100425" description="Phosphoribosylformylglycinamidine synthase">
    <location>
        <begin position="1"/>
        <end position="1348"/>
    </location>
</feature>
<feature type="domain" description="Glutamine amidotransferase type-1" evidence="1">
    <location>
        <begin position="1099"/>
        <end position="1348"/>
    </location>
</feature>
<feature type="active site" description="Nucleophile" evidence="1">
    <location>
        <position position="1192"/>
    </location>
</feature>
<feature type="active site" evidence="1">
    <location>
        <position position="1313"/>
    </location>
</feature>
<feature type="active site" evidence="1">
    <location>
        <position position="1315"/>
    </location>
</feature>
<feature type="binding site" evidence="1">
    <location>
        <begin position="300"/>
        <end position="311"/>
    </location>
    <ligand>
        <name>ATP</name>
        <dbReference type="ChEBI" id="CHEBI:30616"/>
    </ligand>
</feature>
<feature type="binding site" evidence="1">
    <location>
        <position position="701"/>
    </location>
    <ligand>
        <name>ATP</name>
        <dbReference type="ChEBI" id="CHEBI:30616"/>
    </ligand>
</feature>
<feature type="binding site" evidence="1">
    <location>
        <position position="702"/>
    </location>
    <ligand>
        <name>Mg(2+)</name>
        <dbReference type="ChEBI" id="CHEBI:18420"/>
    </ligand>
</feature>
<feature type="binding site" evidence="1">
    <location>
        <position position="741"/>
    </location>
    <ligand>
        <name>Mg(2+)</name>
        <dbReference type="ChEBI" id="CHEBI:18420"/>
    </ligand>
</feature>
<feature type="binding site" evidence="1">
    <location>
        <position position="745"/>
    </location>
    <ligand>
        <name>Mg(2+)</name>
        <dbReference type="ChEBI" id="CHEBI:18420"/>
    </ligand>
</feature>
<feature type="binding site" evidence="1">
    <location>
        <position position="941"/>
    </location>
    <ligand>
        <name>Mg(2+)</name>
        <dbReference type="ChEBI" id="CHEBI:18420"/>
    </ligand>
</feature>
<feature type="binding site" evidence="1">
    <location>
        <position position="943"/>
    </location>
    <ligand>
        <name>ATP</name>
        <dbReference type="ChEBI" id="CHEBI:30616"/>
    </ligand>
</feature>
<proteinExistence type="inferred from homology"/>
<comment type="function">
    <text evidence="1">Phosphoribosylformylglycinamidine synthase involved in the purines biosynthetic pathway. Catalyzes the ATP-dependent conversion of formylglycinamide ribonucleotide (FGAR) and glutamine to yield formylglycinamidine ribonucleotide (FGAM) and glutamate.</text>
</comment>
<comment type="catalytic activity">
    <reaction evidence="1">
        <text>N(2)-formyl-N(1)-(5-phospho-beta-D-ribosyl)glycinamide + L-glutamine + ATP + H2O = 2-formamido-N(1)-(5-O-phospho-beta-D-ribosyl)acetamidine + L-glutamate + ADP + phosphate + H(+)</text>
        <dbReference type="Rhea" id="RHEA:17129"/>
        <dbReference type="ChEBI" id="CHEBI:15377"/>
        <dbReference type="ChEBI" id="CHEBI:15378"/>
        <dbReference type="ChEBI" id="CHEBI:29985"/>
        <dbReference type="ChEBI" id="CHEBI:30616"/>
        <dbReference type="ChEBI" id="CHEBI:43474"/>
        <dbReference type="ChEBI" id="CHEBI:58359"/>
        <dbReference type="ChEBI" id="CHEBI:147286"/>
        <dbReference type="ChEBI" id="CHEBI:147287"/>
        <dbReference type="ChEBI" id="CHEBI:456216"/>
        <dbReference type="EC" id="6.3.5.3"/>
    </reaction>
</comment>
<comment type="pathway">
    <text evidence="1">Purine metabolism; IMP biosynthesis via de novo pathway; 5-amino-1-(5-phospho-D-ribosyl)imidazole from N(2)-formyl-N(1)-(5-phospho-D-ribosyl)glycinamide: step 1/2.</text>
</comment>
<comment type="subunit">
    <text evidence="1">Monomer.</text>
</comment>
<comment type="subcellular location">
    <subcellularLocation>
        <location evidence="1">Cytoplasm</location>
    </subcellularLocation>
</comment>
<comment type="similarity">
    <text evidence="1">In the N-terminal section; belongs to the FGAMS family.</text>
</comment>
<gene>
    <name evidence="1" type="primary">purL</name>
    <name type="ordered locus">XCC0656</name>
</gene>